<protein>
    <recommendedName>
        <fullName evidence="2">Phosphoribosylamine--glycine ligase</fullName>
        <ecNumber evidence="2">6.3.4.13</ecNumber>
    </recommendedName>
    <alternativeName>
        <fullName evidence="2">GARS</fullName>
    </alternativeName>
    <alternativeName>
        <fullName evidence="2">Glycinamide ribonucleotide synthetase</fullName>
    </alternativeName>
    <alternativeName>
        <fullName evidence="2">Phosphoribosylglycinamide synthetase</fullName>
    </alternativeName>
</protein>
<reference key="1">
    <citation type="journal article" date="2002" name="Nature">
        <title>Complete genome sequence of the model actinomycete Streptomyces coelicolor A3(2).</title>
        <authorList>
            <person name="Bentley S.D."/>
            <person name="Chater K.F."/>
            <person name="Cerdeno-Tarraga A.-M."/>
            <person name="Challis G.L."/>
            <person name="Thomson N.R."/>
            <person name="James K.D."/>
            <person name="Harris D.E."/>
            <person name="Quail M.A."/>
            <person name="Kieser H."/>
            <person name="Harper D."/>
            <person name="Bateman A."/>
            <person name="Brown S."/>
            <person name="Chandra G."/>
            <person name="Chen C.W."/>
            <person name="Collins M."/>
            <person name="Cronin A."/>
            <person name="Fraser A."/>
            <person name="Goble A."/>
            <person name="Hidalgo J."/>
            <person name="Hornsby T."/>
            <person name="Howarth S."/>
            <person name="Huang C.-H."/>
            <person name="Kieser T."/>
            <person name="Larke L."/>
            <person name="Murphy L.D."/>
            <person name="Oliver K."/>
            <person name="O'Neil S."/>
            <person name="Rabbinowitsch E."/>
            <person name="Rajandream M.A."/>
            <person name="Rutherford K.M."/>
            <person name="Rutter S."/>
            <person name="Seeger K."/>
            <person name="Saunders D."/>
            <person name="Sharp S."/>
            <person name="Squares R."/>
            <person name="Squares S."/>
            <person name="Taylor K."/>
            <person name="Warren T."/>
            <person name="Wietzorrek A."/>
            <person name="Woodward J.R."/>
            <person name="Barrell B.G."/>
            <person name="Parkhill J."/>
            <person name="Hopwood D.A."/>
        </authorList>
    </citation>
    <scope>NUCLEOTIDE SEQUENCE [LARGE SCALE GENOMIC DNA]</scope>
    <source>
        <strain>ATCC BAA-471 / A3(2) / M145</strain>
    </source>
</reference>
<accession>Q9RKL4</accession>
<name>PUR2_STRCO</name>
<keyword id="KW-0067">ATP-binding</keyword>
<keyword id="KW-0436">Ligase</keyword>
<keyword id="KW-0460">Magnesium</keyword>
<keyword id="KW-0464">Manganese</keyword>
<keyword id="KW-0479">Metal-binding</keyword>
<keyword id="KW-0547">Nucleotide-binding</keyword>
<keyword id="KW-0658">Purine biosynthesis</keyword>
<keyword id="KW-1185">Reference proteome</keyword>
<dbReference type="EC" id="6.3.4.13" evidence="2"/>
<dbReference type="EMBL" id="AL939118">
    <property type="protein sequence ID" value="CAB56348.1"/>
    <property type="molecule type" value="Genomic_DNA"/>
</dbReference>
<dbReference type="RefSeq" id="NP_628249.1">
    <property type="nucleotide sequence ID" value="NC_003888.3"/>
</dbReference>
<dbReference type="RefSeq" id="WP_011029417.1">
    <property type="nucleotide sequence ID" value="NZ_VNID01000030.1"/>
</dbReference>
<dbReference type="SMR" id="Q9RKL4"/>
<dbReference type="FunCoup" id="Q9RKL4">
    <property type="interactions" value="316"/>
</dbReference>
<dbReference type="STRING" id="100226.gene:17761701"/>
<dbReference type="PaxDb" id="100226-SCO4068"/>
<dbReference type="KEGG" id="sco:SCO4068"/>
<dbReference type="PATRIC" id="fig|100226.15.peg.4127"/>
<dbReference type="eggNOG" id="COG0151">
    <property type="taxonomic scope" value="Bacteria"/>
</dbReference>
<dbReference type="HOGENOM" id="CLU_027420_3_1_11"/>
<dbReference type="InParanoid" id="Q9RKL4"/>
<dbReference type="OrthoDB" id="9807240at2"/>
<dbReference type="PhylomeDB" id="Q9RKL4"/>
<dbReference type="UniPathway" id="UPA00074">
    <property type="reaction ID" value="UER00125"/>
</dbReference>
<dbReference type="Proteomes" id="UP000001973">
    <property type="component" value="Chromosome"/>
</dbReference>
<dbReference type="GO" id="GO:0005524">
    <property type="term" value="F:ATP binding"/>
    <property type="evidence" value="ECO:0007669"/>
    <property type="project" value="UniProtKB-KW"/>
</dbReference>
<dbReference type="GO" id="GO:0046872">
    <property type="term" value="F:metal ion binding"/>
    <property type="evidence" value="ECO:0007669"/>
    <property type="project" value="UniProtKB-KW"/>
</dbReference>
<dbReference type="GO" id="GO:0004637">
    <property type="term" value="F:phosphoribosylamine-glycine ligase activity"/>
    <property type="evidence" value="ECO:0007669"/>
    <property type="project" value="UniProtKB-UniRule"/>
</dbReference>
<dbReference type="GO" id="GO:0006189">
    <property type="term" value="P:'de novo' IMP biosynthetic process"/>
    <property type="evidence" value="ECO:0007669"/>
    <property type="project" value="UniProtKB-UniRule"/>
</dbReference>
<dbReference type="GO" id="GO:0009113">
    <property type="term" value="P:purine nucleobase biosynthetic process"/>
    <property type="evidence" value="ECO:0007669"/>
    <property type="project" value="InterPro"/>
</dbReference>
<dbReference type="Gene3D" id="3.40.50.20">
    <property type="match status" value="1"/>
</dbReference>
<dbReference type="Gene3D" id="3.30.1490.20">
    <property type="entry name" value="ATP-grasp fold, A domain"/>
    <property type="match status" value="1"/>
</dbReference>
<dbReference type="Gene3D" id="3.30.470.20">
    <property type="entry name" value="ATP-grasp fold, B domain"/>
    <property type="match status" value="1"/>
</dbReference>
<dbReference type="Gene3D" id="3.90.600.10">
    <property type="entry name" value="Phosphoribosylglycinamide synthetase, C-terminal domain"/>
    <property type="match status" value="1"/>
</dbReference>
<dbReference type="HAMAP" id="MF_00138">
    <property type="entry name" value="GARS"/>
    <property type="match status" value="1"/>
</dbReference>
<dbReference type="InterPro" id="IPR011761">
    <property type="entry name" value="ATP-grasp"/>
</dbReference>
<dbReference type="InterPro" id="IPR013815">
    <property type="entry name" value="ATP_grasp_subdomain_1"/>
</dbReference>
<dbReference type="InterPro" id="IPR016185">
    <property type="entry name" value="PreATP-grasp_dom_sf"/>
</dbReference>
<dbReference type="InterPro" id="IPR020561">
    <property type="entry name" value="PRibGlycinamid_synth_ATP-grasp"/>
</dbReference>
<dbReference type="InterPro" id="IPR000115">
    <property type="entry name" value="PRibGlycinamide_synth"/>
</dbReference>
<dbReference type="InterPro" id="IPR020560">
    <property type="entry name" value="PRibGlycinamide_synth_C-dom"/>
</dbReference>
<dbReference type="InterPro" id="IPR037123">
    <property type="entry name" value="PRibGlycinamide_synth_C_sf"/>
</dbReference>
<dbReference type="InterPro" id="IPR020559">
    <property type="entry name" value="PRibGlycinamide_synth_CS"/>
</dbReference>
<dbReference type="InterPro" id="IPR020562">
    <property type="entry name" value="PRibGlycinamide_synth_N"/>
</dbReference>
<dbReference type="InterPro" id="IPR011054">
    <property type="entry name" value="Rudment_hybrid_motif"/>
</dbReference>
<dbReference type="NCBIfam" id="TIGR00877">
    <property type="entry name" value="purD"/>
    <property type="match status" value="1"/>
</dbReference>
<dbReference type="PANTHER" id="PTHR43472">
    <property type="entry name" value="PHOSPHORIBOSYLAMINE--GLYCINE LIGASE"/>
    <property type="match status" value="1"/>
</dbReference>
<dbReference type="PANTHER" id="PTHR43472:SF1">
    <property type="entry name" value="PHOSPHORIBOSYLAMINE--GLYCINE LIGASE, CHLOROPLASTIC"/>
    <property type="match status" value="1"/>
</dbReference>
<dbReference type="Pfam" id="PF01071">
    <property type="entry name" value="GARS_A"/>
    <property type="match status" value="1"/>
</dbReference>
<dbReference type="Pfam" id="PF02843">
    <property type="entry name" value="GARS_C"/>
    <property type="match status" value="1"/>
</dbReference>
<dbReference type="Pfam" id="PF02844">
    <property type="entry name" value="GARS_N"/>
    <property type="match status" value="1"/>
</dbReference>
<dbReference type="SMART" id="SM01209">
    <property type="entry name" value="GARS_A"/>
    <property type="match status" value="1"/>
</dbReference>
<dbReference type="SMART" id="SM01210">
    <property type="entry name" value="GARS_C"/>
    <property type="match status" value="1"/>
</dbReference>
<dbReference type="SUPFAM" id="SSF56059">
    <property type="entry name" value="Glutathione synthetase ATP-binding domain-like"/>
    <property type="match status" value="1"/>
</dbReference>
<dbReference type="SUPFAM" id="SSF52440">
    <property type="entry name" value="PreATP-grasp domain"/>
    <property type="match status" value="1"/>
</dbReference>
<dbReference type="SUPFAM" id="SSF51246">
    <property type="entry name" value="Rudiment single hybrid motif"/>
    <property type="match status" value="1"/>
</dbReference>
<dbReference type="PROSITE" id="PS50975">
    <property type="entry name" value="ATP_GRASP"/>
    <property type="match status" value="1"/>
</dbReference>
<dbReference type="PROSITE" id="PS00184">
    <property type="entry name" value="GARS"/>
    <property type="match status" value="1"/>
</dbReference>
<organism>
    <name type="scientific">Streptomyces coelicolor (strain ATCC BAA-471 / A3(2) / M145)</name>
    <dbReference type="NCBI Taxonomy" id="100226"/>
    <lineage>
        <taxon>Bacteria</taxon>
        <taxon>Bacillati</taxon>
        <taxon>Actinomycetota</taxon>
        <taxon>Actinomycetes</taxon>
        <taxon>Kitasatosporales</taxon>
        <taxon>Streptomycetaceae</taxon>
        <taxon>Streptomyces</taxon>
        <taxon>Streptomyces albidoflavus group</taxon>
    </lineage>
</organism>
<sequence length="416" mass="42623">MKVLVIGGGAREHALCRSLSLDPDVTALHCAPGNAGIAEVAELHQVDALDGAAVTALAGRLGAELVVVGPEAPLVAGVADAVREAGIPVFGPSGEAARLEGSKAFAKDVMACAGVPTARSYVCTNPAEVDAALAAFGAPYVVKDDGLAAGKGVVVTDDVEAARAHANACDRVVVEEFLDGPEVSLFAVTDGENVRPLQPAQDFKRALDGDEGPNTGGMGAYSPLPWADPKLVDEVVQSVLQPTVDEMRRRGTPFSGLLYAGLAITSRGVRVIEFNARFGDPETQVVLARLKTPLAGLLMAAATGNLADLEPLRWSDEAAVTVVVASHNYPGTPRTGDPITGLDEVAAQDAPHAYVLHAGTRAEGDAVVSAGGRVLSVTATGADLTEARDRAYRAVARIGLDGSQHRTDIAAKAAGA</sequence>
<proteinExistence type="inferred from homology"/>
<gene>
    <name evidence="2" type="primary">purD</name>
    <name type="ordered locus">SCO4068</name>
    <name type="ORF">SCD25.04</name>
</gene>
<comment type="catalytic activity">
    <reaction evidence="2">
        <text>5-phospho-beta-D-ribosylamine + glycine + ATP = N(1)-(5-phospho-beta-D-ribosyl)glycinamide + ADP + phosphate + H(+)</text>
        <dbReference type="Rhea" id="RHEA:17453"/>
        <dbReference type="ChEBI" id="CHEBI:15378"/>
        <dbReference type="ChEBI" id="CHEBI:30616"/>
        <dbReference type="ChEBI" id="CHEBI:43474"/>
        <dbReference type="ChEBI" id="CHEBI:57305"/>
        <dbReference type="ChEBI" id="CHEBI:58681"/>
        <dbReference type="ChEBI" id="CHEBI:143788"/>
        <dbReference type="ChEBI" id="CHEBI:456216"/>
        <dbReference type="EC" id="6.3.4.13"/>
    </reaction>
</comment>
<comment type="cofactor">
    <cofactor evidence="1">
        <name>Mg(2+)</name>
        <dbReference type="ChEBI" id="CHEBI:18420"/>
    </cofactor>
    <cofactor evidence="1">
        <name>Mn(2+)</name>
        <dbReference type="ChEBI" id="CHEBI:29035"/>
    </cofactor>
    <text evidence="1">Binds 1 Mg(2+) or Mn(2+) ion per subunit.</text>
</comment>
<comment type="pathway">
    <text evidence="2">Purine metabolism; IMP biosynthesis via de novo pathway; N(1)-(5-phospho-D-ribosyl)glycinamide from 5-phospho-alpha-D-ribose 1-diphosphate: step 2/2.</text>
</comment>
<comment type="similarity">
    <text evidence="2">Belongs to the GARS family.</text>
</comment>
<feature type="chain" id="PRO_0000151486" description="Phosphoribosylamine--glycine ligase">
    <location>
        <begin position="1"/>
        <end position="416"/>
    </location>
</feature>
<feature type="domain" description="ATP-grasp" evidence="2">
    <location>
        <begin position="107"/>
        <end position="303"/>
    </location>
</feature>
<feature type="binding site" evidence="2">
    <location>
        <begin position="133"/>
        <end position="184"/>
    </location>
    <ligand>
        <name>ATP</name>
        <dbReference type="ChEBI" id="CHEBI:30616"/>
    </ligand>
</feature>
<feature type="binding site" evidence="2">
    <location>
        <position position="273"/>
    </location>
    <ligand>
        <name>Mg(2+)</name>
        <dbReference type="ChEBI" id="CHEBI:18420"/>
    </ligand>
</feature>
<feature type="binding site" evidence="2">
    <location>
        <position position="275"/>
    </location>
    <ligand>
        <name>Mg(2+)</name>
        <dbReference type="ChEBI" id="CHEBI:18420"/>
    </ligand>
</feature>
<evidence type="ECO:0000250" key="1"/>
<evidence type="ECO:0000255" key="2">
    <source>
        <dbReference type="HAMAP-Rule" id="MF_00138"/>
    </source>
</evidence>